<sequence length="226" mass="25276">MNPIVINKLQRKLGYTFTHQELLQQALTHRSASSKHNERLEFLGDSILSYVIANALYQRFPRVDEGDMSRMRATLVRGNTLAEMAREFDLGECLRLGPGELKSGGYRRESILADTVEALIGGVFLDSDIQAVEQLILSWYASRLDQISPGDKQKDPKTRLQEFLQGRHLPLPSYLVVQVRGEAHDQEFTIHCQVSGMAEPVVGTGSSRRKAEQAAAEQALIKLGIE</sequence>
<reference key="1">
    <citation type="journal article" date="2008" name="Environ. Microbiol.">
        <title>The genome of Erwinia tasmaniensis strain Et1/99, a non-pathogenic bacterium in the genus Erwinia.</title>
        <authorList>
            <person name="Kube M."/>
            <person name="Migdoll A.M."/>
            <person name="Mueller I."/>
            <person name="Kuhl H."/>
            <person name="Beck A."/>
            <person name="Reinhardt R."/>
            <person name="Geider K."/>
        </authorList>
    </citation>
    <scope>NUCLEOTIDE SEQUENCE [LARGE SCALE GENOMIC DNA]</scope>
    <source>
        <strain>DSM 17950 / CFBP 7177 / CIP 109463 / NCPPB 4357 / Et1/99</strain>
    </source>
</reference>
<dbReference type="EC" id="3.1.26.3" evidence="1"/>
<dbReference type="EMBL" id="CU468135">
    <property type="protein sequence ID" value="CAO96038.1"/>
    <property type="molecule type" value="Genomic_DNA"/>
</dbReference>
<dbReference type="RefSeq" id="WP_012440739.1">
    <property type="nucleotide sequence ID" value="NC_010694.1"/>
</dbReference>
<dbReference type="SMR" id="B2VI46"/>
<dbReference type="STRING" id="465817.ETA_09920"/>
<dbReference type="KEGG" id="eta:ETA_09920"/>
<dbReference type="eggNOG" id="COG0571">
    <property type="taxonomic scope" value="Bacteria"/>
</dbReference>
<dbReference type="HOGENOM" id="CLU_000907_1_1_6"/>
<dbReference type="OrthoDB" id="9805026at2"/>
<dbReference type="Proteomes" id="UP000001726">
    <property type="component" value="Chromosome"/>
</dbReference>
<dbReference type="GO" id="GO:0005737">
    <property type="term" value="C:cytoplasm"/>
    <property type="evidence" value="ECO:0007669"/>
    <property type="project" value="UniProtKB-SubCell"/>
</dbReference>
<dbReference type="GO" id="GO:0003725">
    <property type="term" value="F:double-stranded RNA binding"/>
    <property type="evidence" value="ECO:0007669"/>
    <property type="project" value="TreeGrafter"/>
</dbReference>
<dbReference type="GO" id="GO:0046872">
    <property type="term" value="F:metal ion binding"/>
    <property type="evidence" value="ECO:0007669"/>
    <property type="project" value="UniProtKB-KW"/>
</dbReference>
<dbReference type="GO" id="GO:0004525">
    <property type="term" value="F:ribonuclease III activity"/>
    <property type="evidence" value="ECO:0007669"/>
    <property type="project" value="UniProtKB-UniRule"/>
</dbReference>
<dbReference type="GO" id="GO:0019843">
    <property type="term" value="F:rRNA binding"/>
    <property type="evidence" value="ECO:0007669"/>
    <property type="project" value="UniProtKB-KW"/>
</dbReference>
<dbReference type="GO" id="GO:0006397">
    <property type="term" value="P:mRNA processing"/>
    <property type="evidence" value="ECO:0007669"/>
    <property type="project" value="UniProtKB-UniRule"/>
</dbReference>
<dbReference type="GO" id="GO:0010468">
    <property type="term" value="P:regulation of gene expression"/>
    <property type="evidence" value="ECO:0007669"/>
    <property type="project" value="TreeGrafter"/>
</dbReference>
<dbReference type="GO" id="GO:0006364">
    <property type="term" value="P:rRNA processing"/>
    <property type="evidence" value="ECO:0007669"/>
    <property type="project" value="UniProtKB-UniRule"/>
</dbReference>
<dbReference type="GO" id="GO:0008033">
    <property type="term" value="P:tRNA processing"/>
    <property type="evidence" value="ECO:0007669"/>
    <property type="project" value="UniProtKB-KW"/>
</dbReference>
<dbReference type="CDD" id="cd10845">
    <property type="entry name" value="DSRM_RNAse_III_family"/>
    <property type="match status" value="1"/>
</dbReference>
<dbReference type="CDD" id="cd00593">
    <property type="entry name" value="RIBOc"/>
    <property type="match status" value="1"/>
</dbReference>
<dbReference type="FunFam" id="1.10.1520.10:FF:000001">
    <property type="entry name" value="Ribonuclease 3"/>
    <property type="match status" value="1"/>
</dbReference>
<dbReference type="FunFam" id="3.30.160.20:FF:000003">
    <property type="entry name" value="Ribonuclease 3"/>
    <property type="match status" value="1"/>
</dbReference>
<dbReference type="Gene3D" id="3.30.160.20">
    <property type="match status" value="1"/>
</dbReference>
<dbReference type="Gene3D" id="1.10.1520.10">
    <property type="entry name" value="Ribonuclease III domain"/>
    <property type="match status" value="1"/>
</dbReference>
<dbReference type="HAMAP" id="MF_00104">
    <property type="entry name" value="RNase_III"/>
    <property type="match status" value="1"/>
</dbReference>
<dbReference type="InterPro" id="IPR014720">
    <property type="entry name" value="dsRBD_dom"/>
</dbReference>
<dbReference type="InterPro" id="IPR011907">
    <property type="entry name" value="RNase_III"/>
</dbReference>
<dbReference type="InterPro" id="IPR000999">
    <property type="entry name" value="RNase_III_dom"/>
</dbReference>
<dbReference type="InterPro" id="IPR036389">
    <property type="entry name" value="RNase_III_sf"/>
</dbReference>
<dbReference type="NCBIfam" id="TIGR02191">
    <property type="entry name" value="RNaseIII"/>
    <property type="match status" value="1"/>
</dbReference>
<dbReference type="PANTHER" id="PTHR11207:SF0">
    <property type="entry name" value="RIBONUCLEASE 3"/>
    <property type="match status" value="1"/>
</dbReference>
<dbReference type="PANTHER" id="PTHR11207">
    <property type="entry name" value="RIBONUCLEASE III"/>
    <property type="match status" value="1"/>
</dbReference>
<dbReference type="Pfam" id="PF00035">
    <property type="entry name" value="dsrm"/>
    <property type="match status" value="1"/>
</dbReference>
<dbReference type="Pfam" id="PF14622">
    <property type="entry name" value="Ribonucleas_3_3"/>
    <property type="match status" value="1"/>
</dbReference>
<dbReference type="SMART" id="SM00358">
    <property type="entry name" value="DSRM"/>
    <property type="match status" value="1"/>
</dbReference>
<dbReference type="SMART" id="SM00535">
    <property type="entry name" value="RIBOc"/>
    <property type="match status" value="1"/>
</dbReference>
<dbReference type="SUPFAM" id="SSF54768">
    <property type="entry name" value="dsRNA-binding domain-like"/>
    <property type="match status" value="1"/>
</dbReference>
<dbReference type="SUPFAM" id="SSF69065">
    <property type="entry name" value="RNase III domain-like"/>
    <property type="match status" value="1"/>
</dbReference>
<dbReference type="PROSITE" id="PS50137">
    <property type="entry name" value="DS_RBD"/>
    <property type="match status" value="1"/>
</dbReference>
<dbReference type="PROSITE" id="PS00517">
    <property type="entry name" value="RNASE_3_1"/>
    <property type="match status" value="1"/>
</dbReference>
<dbReference type="PROSITE" id="PS50142">
    <property type="entry name" value="RNASE_3_2"/>
    <property type="match status" value="1"/>
</dbReference>
<organism>
    <name type="scientific">Erwinia tasmaniensis (strain DSM 17950 / CFBP 7177 / CIP 109463 / NCPPB 4357 / Et1/99)</name>
    <dbReference type="NCBI Taxonomy" id="465817"/>
    <lineage>
        <taxon>Bacteria</taxon>
        <taxon>Pseudomonadati</taxon>
        <taxon>Pseudomonadota</taxon>
        <taxon>Gammaproteobacteria</taxon>
        <taxon>Enterobacterales</taxon>
        <taxon>Erwiniaceae</taxon>
        <taxon>Erwinia</taxon>
    </lineage>
</organism>
<evidence type="ECO:0000255" key="1">
    <source>
        <dbReference type="HAMAP-Rule" id="MF_00104"/>
    </source>
</evidence>
<name>RNC_ERWT9</name>
<gene>
    <name evidence="1" type="primary">rnc</name>
    <name type="ordered locus">ETA_09920</name>
</gene>
<accession>B2VI46</accession>
<proteinExistence type="inferred from homology"/>
<comment type="function">
    <text evidence="1">Digests double-stranded RNA. Involved in the processing of primary rRNA transcript to yield the immediate precursors to the large and small rRNAs (23S and 16S). Processes some mRNAs, and tRNAs when they are encoded in the rRNA operon. Processes pre-crRNA and tracrRNA of type II CRISPR loci if present in the organism.</text>
</comment>
<comment type="catalytic activity">
    <reaction evidence="1">
        <text>Endonucleolytic cleavage to 5'-phosphomonoester.</text>
        <dbReference type="EC" id="3.1.26.3"/>
    </reaction>
</comment>
<comment type="cofactor">
    <cofactor evidence="1">
        <name>Mg(2+)</name>
        <dbReference type="ChEBI" id="CHEBI:18420"/>
    </cofactor>
</comment>
<comment type="subunit">
    <text evidence="1">Homodimer.</text>
</comment>
<comment type="subcellular location">
    <subcellularLocation>
        <location evidence="1">Cytoplasm</location>
    </subcellularLocation>
</comment>
<comment type="similarity">
    <text evidence="1">Belongs to the ribonuclease III family.</text>
</comment>
<feature type="chain" id="PRO_1000094110" description="Ribonuclease 3">
    <location>
        <begin position="1"/>
        <end position="226"/>
    </location>
</feature>
<feature type="domain" description="RNase III" evidence="1">
    <location>
        <begin position="6"/>
        <end position="128"/>
    </location>
</feature>
<feature type="domain" description="DRBM" evidence="1">
    <location>
        <begin position="155"/>
        <end position="225"/>
    </location>
</feature>
<feature type="active site" evidence="1">
    <location>
        <position position="45"/>
    </location>
</feature>
<feature type="active site" evidence="1">
    <location>
        <position position="117"/>
    </location>
</feature>
<feature type="binding site" evidence="1">
    <location>
        <position position="41"/>
    </location>
    <ligand>
        <name>Mg(2+)</name>
        <dbReference type="ChEBI" id="CHEBI:18420"/>
    </ligand>
</feature>
<feature type="binding site" evidence="1">
    <location>
        <position position="114"/>
    </location>
    <ligand>
        <name>Mg(2+)</name>
        <dbReference type="ChEBI" id="CHEBI:18420"/>
    </ligand>
</feature>
<feature type="binding site" evidence="1">
    <location>
        <position position="117"/>
    </location>
    <ligand>
        <name>Mg(2+)</name>
        <dbReference type="ChEBI" id="CHEBI:18420"/>
    </ligand>
</feature>
<keyword id="KW-0963">Cytoplasm</keyword>
<keyword id="KW-0255">Endonuclease</keyword>
<keyword id="KW-0378">Hydrolase</keyword>
<keyword id="KW-0460">Magnesium</keyword>
<keyword id="KW-0479">Metal-binding</keyword>
<keyword id="KW-0507">mRNA processing</keyword>
<keyword id="KW-0540">Nuclease</keyword>
<keyword id="KW-1185">Reference proteome</keyword>
<keyword id="KW-0694">RNA-binding</keyword>
<keyword id="KW-0698">rRNA processing</keyword>
<keyword id="KW-0699">rRNA-binding</keyword>
<keyword id="KW-0819">tRNA processing</keyword>
<protein>
    <recommendedName>
        <fullName evidence="1">Ribonuclease 3</fullName>
        <ecNumber evidence="1">3.1.26.3</ecNumber>
    </recommendedName>
    <alternativeName>
        <fullName evidence="1">Ribonuclease III</fullName>
        <shortName evidence="1">RNase III</shortName>
    </alternativeName>
</protein>